<gene>
    <name evidence="1" type="primary">aat</name>
    <name type="ordered locus">Pfl01_3587</name>
</gene>
<name>LFTR_PSEPF</name>
<reference key="1">
    <citation type="journal article" date="2009" name="Genome Biol.">
        <title>Genomic and genetic analyses of diversity and plant interactions of Pseudomonas fluorescens.</title>
        <authorList>
            <person name="Silby M.W."/>
            <person name="Cerdeno-Tarraga A.M."/>
            <person name="Vernikos G.S."/>
            <person name="Giddens S.R."/>
            <person name="Jackson R.W."/>
            <person name="Preston G.M."/>
            <person name="Zhang X.-X."/>
            <person name="Moon C.D."/>
            <person name="Gehrig S.M."/>
            <person name="Godfrey S.A.C."/>
            <person name="Knight C.G."/>
            <person name="Malone J.G."/>
            <person name="Robinson Z."/>
            <person name="Spiers A.J."/>
            <person name="Harris S."/>
            <person name="Challis G.L."/>
            <person name="Yaxley A.M."/>
            <person name="Harris D."/>
            <person name="Seeger K."/>
            <person name="Murphy L."/>
            <person name="Rutter S."/>
            <person name="Squares R."/>
            <person name="Quail M.A."/>
            <person name="Saunders E."/>
            <person name="Mavromatis K."/>
            <person name="Brettin T.S."/>
            <person name="Bentley S.D."/>
            <person name="Hothersall J."/>
            <person name="Stephens E."/>
            <person name="Thomas C.M."/>
            <person name="Parkhill J."/>
            <person name="Levy S.B."/>
            <person name="Rainey P.B."/>
            <person name="Thomson N.R."/>
        </authorList>
    </citation>
    <scope>NUCLEOTIDE SEQUENCE [LARGE SCALE GENOMIC DNA]</scope>
    <source>
        <strain>Pf0-1</strain>
    </source>
</reference>
<dbReference type="EC" id="2.3.2.6" evidence="1"/>
<dbReference type="EMBL" id="CP000094">
    <property type="protein sequence ID" value="ABA75325.1"/>
    <property type="molecule type" value="Genomic_DNA"/>
</dbReference>
<dbReference type="RefSeq" id="WP_011334946.1">
    <property type="nucleotide sequence ID" value="NC_007492.2"/>
</dbReference>
<dbReference type="SMR" id="Q3KA79"/>
<dbReference type="KEGG" id="pfo:Pfl01_3587"/>
<dbReference type="eggNOG" id="COG2360">
    <property type="taxonomic scope" value="Bacteria"/>
</dbReference>
<dbReference type="HOGENOM" id="CLU_075045_0_0_6"/>
<dbReference type="Proteomes" id="UP000002704">
    <property type="component" value="Chromosome"/>
</dbReference>
<dbReference type="GO" id="GO:0005737">
    <property type="term" value="C:cytoplasm"/>
    <property type="evidence" value="ECO:0007669"/>
    <property type="project" value="UniProtKB-SubCell"/>
</dbReference>
<dbReference type="GO" id="GO:0008914">
    <property type="term" value="F:leucyl-tRNA--protein transferase activity"/>
    <property type="evidence" value="ECO:0007669"/>
    <property type="project" value="UniProtKB-UniRule"/>
</dbReference>
<dbReference type="GO" id="GO:0030163">
    <property type="term" value="P:protein catabolic process"/>
    <property type="evidence" value="ECO:0007669"/>
    <property type="project" value="UniProtKB-UniRule"/>
</dbReference>
<dbReference type="FunFam" id="3.30.70.3550:FF:000001">
    <property type="entry name" value="Leucyl/phenylalanyl-tRNA--protein transferase"/>
    <property type="match status" value="1"/>
</dbReference>
<dbReference type="FunFam" id="3.40.630.70:FF:000001">
    <property type="entry name" value="Leucyl/phenylalanyl-tRNA--protein transferase"/>
    <property type="match status" value="1"/>
</dbReference>
<dbReference type="Gene3D" id="3.40.630.70">
    <property type="entry name" value="Leucyl/phenylalanyl-tRNA-protein transferase, C-terminal domain"/>
    <property type="match status" value="1"/>
</dbReference>
<dbReference type="Gene3D" id="3.30.70.3550">
    <property type="entry name" value="Leucyl/phenylalanyl-tRNA-protein transferase, N-terminal domain"/>
    <property type="match status" value="1"/>
</dbReference>
<dbReference type="HAMAP" id="MF_00688">
    <property type="entry name" value="Leu_Phe_trans"/>
    <property type="match status" value="1"/>
</dbReference>
<dbReference type="InterPro" id="IPR016181">
    <property type="entry name" value="Acyl_CoA_acyltransferase"/>
</dbReference>
<dbReference type="InterPro" id="IPR004616">
    <property type="entry name" value="Leu/Phe-tRNA_Trfase"/>
</dbReference>
<dbReference type="InterPro" id="IPR042203">
    <property type="entry name" value="Leu/Phe-tRNA_Trfase_C"/>
</dbReference>
<dbReference type="InterPro" id="IPR042221">
    <property type="entry name" value="Leu/Phe-tRNA_Trfase_N"/>
</dbReference>
<dbReference type="NCBIfam" id="TIGR00667">
    <property type="entry name" value="aat"/>
    <property type="match status" value="1"/>
</dbReference>
<dbReference type="PANTHER" id="PTHR30098">
    <property type="entry name" value="LEUCYL/PHENYLALANYL-TRNA--PROTEIN TRANSFERASE"/>
    <property type="match status" value="1"/>
</dbReference>
<dbReference type="PANTHER" id="PTHR30098:SF2">
    <property type="entry name" value="LEUCYL_PHENYLALANYL-TRNA--PROTEIN TRANSFERASE"/>
    <property type="match status" value="1"/>
</dbReference>
<dbReference type="Pfam" id="PF03588">
    <property type="entry name" value="Leu_Phe_trans"/>
    <property type="match status" value="1"/>
</dbReference>
<dbReference type="SUPFAM" id="SSF55729">
    <property type="entry name" value="Acyl-CoA N-acyltransferases (Nat)"/>
    <property type="match status" value="1"/>
</dbReference>
<organism>
    <name type="scientific">Pseudomonas fluorescens (strain Pf0-1)</name>
    <dbReference type="NCBI Taxonomy" id="205922"/>
    <lineage>
        <taxon>Bacteria</taxon>
        <taxon>Pseudomonadati</taxon>
        <taxon>Pseudomonadota</taxon>
        <taxon>Gammaproteobacteria</taxon>
        <taxon>Pseudomonadales</taxon>
        <taxon>Pseudomonadaceae</taxon>
        <taxon>Pseudomonas</taxon>
    </lineage>
</organism>
<accession>Q3KA79</accession>
<protein>
    <recommendedName>
        <fullName evidence="1">Leucyl/phenylalanyl-tRNA--protein transferase</fullName>
        <ecNumber evidence="1">2.3.2.6</ecNumber>
    </recommendedName>
    <alternativeName>
        <fullName evidence="1">L/F-transferase</fullName>
    </alternativeName>
    <alternativeName>
        <fullName evidence="1">Leucyltransferase</fullName>
    </alternativeName>
    <alternativeName>
        <fullName evidence="1">Phenyalanyltransferase</fullName>
    </alternativeName>
</protein>
<evidence type="ECO:0000255" key="1">
    <source>
        <dbReference type="HAMAP-Rule" id="MF_00688"/>
    </source>
</evidence>
<sequence>MLTWLQRNSLTFPPLEKAMRDPNGLLAAGGDLSADRLIQAYRHGCFPWFSEGQPILWWSPDPRTVLFPDELHVSRSLGKLMRKQRYRVTFDQDFDAVIRACAAPREYADGTWITEAMQDAYIELHRRGFAHSVEVWDEGELVGGLYGLAMGQLFFGESMFSRADNASKYGFATLVQHLREAGFVLIDCQMPTDHLHSLGARAISRQTFADYLARHLDQPNHATWVC</sequence>
<comment type="function">
    <text evidence="1">Functions in the N-end rule pathway of protein degradation where it conjugates Leu, Phe and, less efficiently, Met from aminoacyl-tRNAs to the N-termini of proteins containing an N-terminal arginine or lysine.</text>
</comment>
<comment type="catalytic activity">
    <reaction evidence="1">
        <text>N-terminal L-lysyl-[protein] + L-leucyl-tRNA(Leu) = N-terminal L-leucyl-L-lysyl-[protein] + tRNA(Leu) + H(+)</text>
        <dbReference type="Rhea" id="RHEA:12340"/>
        <dbReference type="Rhea" id="RHEA-COMP:9613"/>
        <dbReference type="Rhea" id="RHEA-COMP:9622"/>
        <dbReference type="Rhea" id="RHEA-COMP:12670"/>
        <dbReference type="Rhea" id="RHEA-COMP:12671"/>
        <dbReference type="ChEBI" id="CHEBI:15378"/>
        <dbReference type="ChEBI" id="CHEBI:65249"/>
        <dbReference type="ChEBI" id="CHEBI:78442"/>
        <dbReference type="ChEBI" id="CHEBI:78494"/>
        <dbReference type="ChEBI" id="CHEBI:133043"/>
        <dbReference type="EC" id="2.3.2.6"/>
    </reaction>
</comment>
<comment type="catalytic activity">
    <reaction evidence="1">
        <text>N-terminal L-arginyl-[protein] + L-leucyl-tRNA(Leu) = N-terminal L-leucyl-L-arginyl-[protein] + tRNA(Leu) + H(+)</text>
        <dbReference type="Rhea" id="RHEA:50416"/>
        <dbReference type="Rhea" id="RHEA-COMP:9613"/>
        <dbReference type="Rhea" id="RHEA-COMP:9622"/>
        <dbReference type="Rhea" id="RHEA-COMP:12672"/>
        <dbReference type="Rhea" id="RHEA-COMP:12673"/>
        <dbReference type="ChEBI" id="CHEBI:15378"/>
        <dbReference type="ChEBI" id="CHEBI:64719"/>
        <dbReference type="ChEBI" id="CHEBI:78442"/>
        <dbReference type="ChEBI" id="CHEBI:78494"/>
        <dbReference type="ChEBI" id="CHEBI:133044"/>
        <dbReference type="EC" id="2.3.2.6"/>
    </reaction>
</comment>
<comment type="catalytic activity">
    <reaction evidence="1">
        <text>L-phenylalanyl-tRNA(Phe) + an N-terminal L-alpha-aminoacyl-[protein] = an N-terminal L-phenylalanyl-L-alpha-aminoacyl-[protein] + tRNA(Phe)</text>
        <dbReference type="Rhea" id="RHEA:43632"/>
        <dbReference type="Rhea" id="RHEA-COMP:9668"/>
        <dbReference type="Rhea" id="RHEA-COMP:9699"/>
        <dbReference type="Rhea" id="RHEA-COMP:10636"/>
        <dbReference type="Rhea" id="RHEA-COMP:10637"/>
        <dbReference type="ChEBI" id="CHEBI:78442"/>
        <dbReference type="ChEBI" id="CHEBI:78531"/>
        <dbReference type="ChEBI" id="CHEBI:78597"/>
        <dbReference type="ChEBI" id="CHEBI:83561"/>
        <dbReference type="EC" id="2.3.2.6"/>
    </reaction>
</comment>
<comment type="subcellular location">
    <subcellularLocation>
        <location evidence="1">Cytoplasm</location>
    </subcellularLocation>
</comment>
<comment type="similarity">
    <text evidence="1">Belongs to the L/F-transferase family.</text>
</comment>
<proteinExistence type="inferred from homology"/>
<feature type="chain" id="PRO_0000258078" description="Leucyl/phenylalanyl-tRNA--protein transferase">
    <location>
        <begin position="1"/>
        <end position="226"/>
    </location>
</feature>
<keyword id="KW-0012">Acyltransferase</keyword>
<keyword id="KW-0963">Cytoplasm</keyword>
<keyword id="KW-0808">Transferase</keyword>